<feature type="chain" id="PRO_0000376780" description="N-acetyldiaminopimelate deacetylase">
    <location>
        <begin position="1"/>
        <end position="377"/>
    </location>
</feature>
<feature type="active site" evidence="1">
    <location>
        <position position="69"/>
    </location>
</feature>
<feature type="active site" description="Proton acceptor" evidence="1">
    <location>
        <position position="128"/>
    </location>
</feature>
<keyword id="KW-0028">Amino-acid biosynthesis</keyword>
<keyword id="KW-0220">Diaminopimelate biosynthesis</keyword>
<keyword id="KW-0378">Hydrolase</keyword>
<keyword id="KW-0457">Lysine biosynthesis</keyword>
<keyword id="KW-1185">Reference proteome</keyword>
<accession>A8AUM0</accession>
<evidence type="ECO:0000255" key="1">
    <source>
        <dbReference type="HAMAP-Rule" id="MF_01692"/>
    </source>
</evidence>
<sequence>MLDYLKIRRDLHQIPEIGLEEYKTHAYLMQVIEGLTADLDFVEIRTWRTGILVFIKGSSPYKTIGWRTDIDGLPIVEETGLDFASTHEGRMHACGHDMHMTVALGLLEQALSAQPNHNLLFLFQPAEENEAGGMLMYEDGAFGDWLPDEFYGLHVRPDLKVGDIATNRGTLFAGTCEVKLTFKGKGGHAAFPHEANDALIAASYFITQVQTIVSRNVDPIEGAVVTFGSLHAGTTNNVIAETAFLHGTIRTLTQEMNLLTQKRLREIAEGIAQSFDLELDLELKQGGYLPVENHPDLAGELMDFFQKEDGVELIDIAPAMTGEDFGYLLSKVKGVMFWMGVDSPYALHHPKMTPDEAALPFAIEKIGKFLDYKVNER</sequence>
<reference key="1">
    <citation type="journal article" date="2007" name="J. Bacteriol.">
        <title>Genome-wide transcriptional changes in Streptococcus gordonii in response to competence signaling peptide.</title>
        <authorList>
            <person name="Vickerman M.M."/>
            <person name="Iobst S."/>
            <person name="Jesionowski A.M."/>
            <person name="Gill S.R."/>
        </authorList>
    </citation>
    <scope>NUCLEOTIDE SEQUENCE [LARGE SCALE GENOMIC DNA]</scope>
    <source>
        <strain>Challis / ATCC 35105 / BCRC 15272 / CH1 / DL1 / V288</strain>
    </source>
</reference>
<gene>
    <name type="ordered locus">SGO_0159</name>
</gene>
<name>DAPEL_STRGC</name>
<dbReference type="EC" id="3.5.1.47" evidence="1"/>
<dbReference type="EMBL" id="CP000725">
    <property type="protein sequence ID" value="ABV10792.1"/>
    <property type="molecule type" value="Genomic_DNA"/>
</dbReference>
<dbReference type="RefSeq" id="WP_011999701.1">
    <property type="nucleotide sequence ID" value="NC_009785.1"/>
</dbReference>
<dbReference type="SMR" id="A8AUM0"/>
<dbReference type="STRING" id="467705.SGO_0159"/>
<dbReference type="KEGG" id="sgo:SGO_0159"/>
<dbReference type="eggNOG" id="COG1473">
    <property type="taxonomic scope" value="Bacteria"/>
</dbReference>
<dbReference type="HOGENOM" id="CLU_023257_0_1_9"/>
<dbReference type="UniPathway" id="UPA00034">
    <property type="reaction ID" value="UER00024"/>
</dbReference>
<dbReference type="Proteomes" id="UP000001131">
    <property type="component" value="Chromosome"/>
</dbReference>
<dbReference type="GO" id="GO:0050118">
    <property type="term" value="F:N-acetyldiaminopimelate deacetylase activity"/>
    <property type="evidence" value="ECO:0007669"/>
    <property type="project" value="UniProtKB-UniRule"/>
</dbReference>
<dbReference type="GO" id="GO:0019877">
    <property type="term" value="P:diaminopimelate biosynthetic process"/>
    <property type="evidence" value="ECO:0007669"/>
    <property type="project" value="UniProtKB-UniRule"/>
</dbReference>
<dbReference type="GO" id="GO:0009089">
    <property type="term" value="P:lysine biosynthetic process via diaminopimelate"/>
    <property type="evidence" value="ECO:0007669"/>
    <property type="project" value="UniProtKB-UniRule"/>
</dbReference>
<dbReference type="CDD" id="cd05670">
    <property type="entry name" value="M20_Acy1_YkuR-like"/>
    <property type="match status" value="1"/>
</dbReference>
<dbReference type="FunFam" id="3.30.70.360:FF:000001">
    <property type="entry name" value="N-acetyldiaminopimelate deacetylase"/>
    <property type="match status" value="1"/>
</dbReference>
<dbReference type="Gene3D" id="3.30.70.360">
    <property type="match status" value="1"/>
</dbReference>
<dbReference type="Gene3D" id="3.40.630.10">
    <property type="entry name" value="Zn peptidases"/>
    <property type="match status" value="1"/>
</dbReference>
<dbReference type="HAMAP" id="MF_01692">
    <property type="entry name" value="DapEL"/>
    <property type="match status" value="1"/>
</dbReference>
<dbReference type="InterPro" id="IPR023905">
    <property type="entry name" value="AcetylDAP_deacetylase"/>
</dbReference>
<dbReference type="InterPro" id="IPR017439">
    <property type="entry name" value="Amidohydrolase"/>
</dbReference>
<dbReference type="InterPro" id="IPR036264">
    <property type="entry name" value="Bact_exopeptidase_dim_dom"/>
</dbReference>
<dbReference type="InterPro" id="IPR002933">
    <property type="entry name" value="Peptidase_M20"/>
</dbReference>
<dbReference type="InterPro" id="IPR011650">
    <property type="entry name" value="Peptidase_M20_dimer"/>
</dbReference>
<dbReference type="NCBIfam" id="TIGR01891">
    <property type="entry name" value="amidohydrolases"/>
    <property type="match status" value="1"/>
</dbReference>
<dbReference type="PANTHER" id="PTHR11014:SF98">
    <property type="entry name" value="N-ACETYLDIAMINOPIMELATE DEACETYLASE"/>
    <property type="match status" value="1"/>
</dbReference>
<dbReference type="PANTHER" id="PTHR11014">
    <property type="entry name" value="PEPTIDASE M20 FAMILY MEMBER"/>
    <property type="match status" value="1"/>
</dbReference>
<dbReference type="Pfam" id="PF07687">
    <property type="entry name" value="M20_dimer"/>
    <property type="match status" value="1"/>
</dbReference>
<dbReference type="Pfam" id="PF01546">
    <property type="entry name" value="Peptidase_M20"/>
    <property type="match status" value="1"/>
</dbReference>
<dbReference type="PIRSF" id="PIRSF005962">
    <property type="entry name" value="Pept_M20D_amidohydro"/>
    <property type="match status" value="1"/>
</dbReference>
<dbReference type="SUPFAM" id="SSF55031">
    <property type="entry name" value="Bacterial exopeptidase dimerisation domain"/>
    <property type="match status" value="1"/>
</dbReference>
<dbReference type="SUPFAM" id="SSF53187">
    <property type="entry name" value="Zn-dependent exopeptidases"/>
    <property type="match status" value="1"/>
</dbReference>
<proteinExistence type="inferred from homology"/>
<comment type="function">
    <text evidence="1">Catalyzes the conversion of N-acetyl-diaminopimelate to diaminopimelate and acetate.</text>
</comment>
<comment type="catalytic activity">
    <reaction evidence="1">
        <text>N-acetyl-(2S,6S)-2,6-diaminopimelate + H2O = (2S,6S)-2,6-diaminopimelate + acetate</text>
        <dbReference type="Rhea" id="RHEA:20405"/>
        <dbReference type="ChEBI" id="CHEBI:15377"/>
        <dbReference type="ChEBI" id="CHEBI:30089"/>
        <dbReference type="ChEBI" id="CHEBI:57609"/>
        <dbReference type="ChEBI" id="CHEBI:58767"/>
        <dbReference type="EC" id="3.5.1.47"/>
    </reaction>
</comment>
<comment type="pathway">
    <text evidence="1">Amino-acid biosynthesis; L-lysine biosynthesis via DAP pathway; LL-2,6-diaminopimelate from (S)-tetrahydrodipicolinate (acetylase route): step 3/3.</text>
</comment>
<comment type="similarity">
    <text evidence="1">Belongs to the peptidase M20A family. N-acetyldiaminopimelate deacetylase subfamily.</text>
</comment>
<protein>
    <recommendedName>
        <fullName evidence="1">N-acetyldiaminopimelate deacetylase</fullName>
        <ecNumber evidence="1">3.5.1.47</ecNumber>
    </recommendedName>
</protein>
<organism>
    <name type="scientific">Streptococcus gordonii (strain Challis / ATCC 35105 / BCRC 15272 / CH1 / DL1 / V288)</name>
    <dbReference type="NCBI Taxonomy" id="467705"/>
    <lineage>
        <taxon>Bacteria</taxon>
        <taxon>Bacillati</taxon>
        <taxon>Bacillota</taxon>
        <taxon>Bacilli</taxon>
        <taxon>Lactobacillales</taxon>
        <taxon>Streptococcaceae</taxon>
        <taxon>Streptococcus</taxon>
    </lineage>
</organism>